<feature type="chain" id="PRO_0000346192" description="D-ribose pyranase">
    <location>
        <begin position="1"/>
        <end position="139"/>
    </location>
</feature>
<feature type="active site" description="Proton donor" evidence="1">
    <location>
        <position position="20"/>
    </location>
</feature>
<feature type="binding site" evidence="1">
    <location>
        <position position="28"/>
    </location>
    <ligand>
        <name>substrate</name>
    </ligand>
</feature>
<feature type="binding site" evidence="1">
    <location>
        <position position="106"/>
    </location>
    <ligand>
        <name>substrate</name>
    </ligand>
</feature>
<feature type="binding site" evidence="1">
    <location>
        <begin position="128"/>
        <end position="130"/>
    </location>
    <ligand>
        <name>substrate</name>
    </ligand>
</feature>
<accession>A7MMV4</accession>
<proteinExistence type="inferred from homology"/>
<evidence type="ECO:0000255" key="1">
    <source>
        <dbReference type="HAMAP-Rule" id="MF_01661"/>
    </source>
</evidence>
<evidence type="ECO:0000305" key="2"/>
<name>RBSD_CROS8</name>
<sequence length="139" mass="15115">MKKGTVLHSGISSVISRLGHTDTVVVCDAGLPIPSTTERIDLALTQGVPGFLQVVDVVTQEMQVEAAILAEEIKQHNPQLHETLLGQIERLQQHQGNTITVRYVSHEQFKLKTADSQAVIRSGECSPYANIILCAGVTF</sequence>
<comment type="function">
    <text evidence="1">Catalyzes the interconversion of beta-pyran and beta-furan forms of D-ribose.</text>
</comment>
<comment type="catalytic activity">
    <reaction evidence="1">
        <text>beta-D-ribopyranose = beta-D-ribofuranose</text>
        <dbReference type="Rhea" id="RHEA:25432"/>
        <dbReference type="ChEBI" id="CHEBI:27476"/>
        <dbReference type="ChEBI" id="CHEBI:47002"/>
        <dbReference type="EC" id="5.4.99.62"/>
    </reaction>
</comment>
<comment type="pathway">
    <text evidence="1">Carbohydrate metabolism; D-ribose degradation; D-ribose 5-phosphate from beta-D-ribopyranose: step 1/2.</text>
</comment>
<comment type="subunit">
    <text evidence="1">Homodecamer.</text>
</comment>
<comment type="subcellular location">
    <subcellularLocation>
        <location evidence="1">Cytoplasm</location>
    </subcellularLocation>
</comment>
<comment type="similarity">
    <text evidence="1">Belongs to the RbsD / FucU family. RbsD subfamily.</text>
</comment>
<comment type="sequence caution" evidence="2">
    <conflict type="erroneous initiation">
        <sequence resource="EMBL-CDS" id="ABU79208"/>
    </conflict>
</comment>
<reference key="1">
    <citation type="journal article" date="2010" name="PLoS ONE">
        <title>Genome sequence of Cronobacter sakazakii BAA-894 and comparative genomic hybridization analysis with other Cronobacter species.</title>
        <authorList>
            <person name="Kucerova E."/>
            <person name="Clifton S.W."/>
            <person name="Xia X.Q."/>
            <person name="Long F."/>
            <person name="Porwollik S."/>
            <person name="Fulton L."/>
            <person name="Fronick C."/>
            <person name="Minx P."/>
            <person name="Kyung K."/>
            <person name="Warren W."/>
            <person name="Fulton R."/>
            <person name="Feng D."/>
            <person name="Wollam A."/>
            <person name="Shah N."/>
            <person name="Bhonagiri V."/>
            <person name="Nash W.E."/>
            <person name="Hallsworth-Pepin K."/>
            <person name="Wilson R.K."/>
            <person name="McClelland M."/>
            <person name="Forsythe S.J."/>
        </authorList>
    </citation>
    <scope>NUCLEOTIDE SEQUENCE [LARGE SCALE GENOMIC DNA]</scope>
    <source>
        <strain>ATCC BAA-894</strain>
    </source>
</reference>
<dbReference type="EC" id="5.4.99.62" evidence="1"/>
<dbReference type="EMBL" id="CP000783">
    <property type="protein sequence ID" value="ABU79208.1"/>
    <property type="status" value="ALT_INIT"/>
    <property type="molecule type" value="Genomic_DNA"/>
</dbReference>
<dbReference type="RefSeq" id="WP_029039520.1">
    <property type="nucleotide sequence ID" value="NC_009778.1"/>
</dbReference>
<dbReference type="SMR" id="A7MMV4"/>
<dbReference type="GeneID" id="56732662"/>
<dbReference type="KEGG" id="esa:ESA_04022"/>
<dbReference type="HOGENOM" id="CLU_135498_0_0_6"/>
<dbReference type="UniPathway" id="UPA00916">
    <property type="reaction ID" value="UER00888"/>
</dbReference>
<dbReference type="Proteomes" id="UP000000260">
    <property type="component" value="Chromosome"/>
</dbReference>
<dbReference type="GO" id="GO:0005829">
    <property type="term" value="C:cytosol"/>
    <property type="evidence" value="ECO:0007669"/>
    <property type="project" value="TreeGrafter"/>
</dbReference>
<dbReference type="GO" id="GO:0062193">
    <property type="term" value="F:D-ribose pyranase activity"/>
    <property type="evidence" value="ECO:0007669"/>
    <property type="project" value="UniProtKB-EC"/>
</dbReference>
<dbReference type="GO" id="GO:0016872">
    <property type="term" value="F:intramolecular lyase activity"/>
    <property type="evidence" value="ECO:0007669"/>
    <property type="project" value="UniProtKB-UniRule"/>
</dbReference>
<dbReference type="GO" id="GO:0048029">
    <property type="term" value="F:monosaccharide binding"/>
    <property type="evidence" value="ECO:0007669"/>
    <property type="project" value="InterPro"/>
</dbReference>
<dbReference type="GO" id="GO:0019303">
    <property type="term" value="P:D-ribose catabolic process"/>
    <property type="evidence" value="ECO:0007669"/>
    <property type="project" value="UniProtKB-UniRule"/>
</dbReference>
<dbReference type="FunFam" id="3.40.1650.10:FF:000002">
    <property type="entry name" value="D-ribose pyranase"/>
    <property type="match status" value="1"/>
</dbReference>
<dbReference type="Gene3D" id="3.40.1650.10">
    <property type="entry name" value="RbsD-like domain"/>
    <property type="match status" value="1"/>
</dbReference>
<dbReference type="HAMAP" id="MF_01661">
    <property type="entry name" value="D_rib_pyranase"/>
    <property type="match status" value="1"/>
</dbReference>
<dbReference type="InterPro" id="IPR023064">
    <property type="entry name" value="D-ribose_pyranase"/>
</dbReference>
<dbReference type="InterPro" id="IPR023750">
    <property type="entry name" value="RbsD-like_sf"/>
</dbReference>
<dbReference type="InterPro" id="IPR007721">
    <property type="entry name" value="RbsD_FucU"/>
</dbReference>
<dbReference type="NCBIfam" id="NF008761">
    <property type="entry name" value="PRK11797.1"/>
    <property type="match status" value="1"/>
</dbReference>
<dbReference type="PANTHER" id="PTHR37831">
    <property type="entry name" value="D-RIBOSE PYRANASE"/>
    <property type="match status" value="1"/>
</dbReference>
<dbReference type="PANTHER" id="PTHR37831:SF1">
    <property type="entry name" value="D-RIBOSE PYRANASE"/>
    <property type="match status" value="1"/>
</dbReference>
<dbReference type="Pfam" id="PF05025">
    <property type="entry name" value="RbsD_FucU"/>
    <property type="match status" value="1"/>
</dbReference>
<dbReference type="SUPFAM" id="SSF102546">
    <property type="entry name" value="RbsD-like"/>
    <property type="match status" value="1"/>
</dbReference>
<organism>
    <name type="scientific">Cronobacter sakazakii (strain ATCC BAA-894)</name>
    <name type="common">Enterobacter sakazakii</name>
    <dbReference type="NCBI Taxonomy" id="290339"/>
    <lineage>
        <taxon>Bacteria</taxon>
        <taxon>Pseudomonadati</taxon>
        <taxon>Pseudomonadota</taxon>
        <taxon>Gammaproteobacteria</taxon>
        <taxon>Enterobacterales</taxon>
        <taxon>Enterobacteriaceae</taxon>
        <taxon>Cronobacter</taxon>
    </lineage>
</organism>
<protein>
    <recommendedName>
        <fullName evidence="1">D-ribose pyranase</fullName>
        <ecNumber evidence="1">5.4.99.62</ecNumber>
    </recommendedName>
</protein>
<gene>
    <name evidence="1" type="primary">rbsD</name>
    <name type="ordered locus">ESA_04022</name>
</gene>
<keyword id="KW-0119">Carbohydrate metabolism</keyword>
<keyword id="KW-0963">Cytoplasm</keyword>
<keyword id="KW-0413">Isomerase</keyword>
<keyword id="KW-1185">Reference proteome</keyword>